<feature type="chain" id="PRO_0000139306" description="Putative nickel-responsive regulator 3">
    <location>
        <begin position="1"/>
        <end position="140"/>
    </location>
</feature>
<feature type="binding site" evidence="1">
    <location>
        <position position="81"/>
    </location>
    <ligand>
        <name>Ni(2+)</name>
        <dbReference type="ChEBI" id="CHEBI:49786"/>
    </ligand>
</feature>
<feature type="binding site" evidence="1">
    <location>
        <position position="92"/>
    </location>
    <ligand>
        <name>Ni(2+)</name>
        <dbReference type="ChEBI" id="CHEBI:49786"/>
    </ligand>
</feature>
<feature type="binding site" evidence="1">
    <location>
        <position position="94"/>
    </location>
    <ligand>
        <name>Ni(2+)</name>
        <dbReference type="ChEBI" id="CHEBI:49786"/>
    </ligand>
</feature>
<feature type="binding site" evidence="1">
    <location>
        <position position="100"/>
    </location>
    <ligand>
        <name>Ni(2+)</name>
        <dbReference type="ChEBI" id="CHEBI:49786"/>
    </ligand>
</feature>
<comment type="function">
    <text evidence="2">Transcriptional regulator.</text>
</comment>
<comment type="cofactor">
    <cofactor evidence="1">
        <name>Ni(2+)</name>
        <dbReference type="ChEBI" id="CHEBI:49786"/>
    </cofactor>
    <text evidence="1">Binds 1 nickel ion per subunit.</text>
</comment>
<comment type="similarity">
    <text evidence="2">Belongs to the transcriptional regulatory CopG/NikR family.</text>
</comment>
<evidence type="ECO:0000250" key="1"/>
<evidence type="ECO:0000305" key="2"/>
<organism>
    <name type="scientific">Methanosarcina mazei (strain ATCC BAA-159 / DSM 3647 / Goe1 / Go1 / JCM 11833 / OCM 88)</name>
    <name type="common">Methanosarcina frisia</name>
    <dbReference type="NCBI Taxonomy" id="192952"/>
    <lineage>
        <taxon>Archaea</taxon>
        <taxon>Methanobacteriati</taxon>
        <taxon>Methanobacteriota</taxon>
        <taxon>Stenosarchaea group</taxon>
        <taxon>Methanomicrobia</taxon>
        <taxon>Methanosarcinales</taxon>
        <taxon>Methanosarcinaceae</taxon>
        <taxon>Methanosarcina</taxon>
    </lineage>
</organism>
<name>NIKR3_METMA</name>
<dbReference type="EMBL" id="AE008384">
    <property type="protein sequence ID" value="AAM32353.1"/>
    <property type="molecule type" value="Genomic_DNA"/>
</dbReference>
<dbReference type="SMR" id="Q8PTQ6"/>
<dbReference type="KEGG" id="mma:MM_2657"/>
<dbReference type="PATRIC" id="fig|192952.21.peg.3061"/>
<dbReference type="eggNOG" id="arCOG01008">
    <property type="taxonomic scope" value="Archaea"/>
</dbReference>
<dbReference type="HOGENOM" id="CLU_113319_1_2_2"/>
<dbReference type="Proteomes" id="UP000000595">
    <property type="component" value="Chromosome"/>
</dbReference>
<dbReference type="GO" id="GO:0003677">
    <property type="term" value="F:DNA binding"/>
    <property type="evidence" value="ECO:0007669"/>
    <property type="project" value="UniProtKB-KW"/>
</dbReference>
<dbReference type="GO" id="GO:0003700">
    <property type="term" value="F:DNA-binding transcription factor activity"/>
    <property type="evidence" value="ECO:0007669"/>
    <property type="project" value="UniProtKB-UniRule"/>
</dbReference>
<dbReference type="GO" id="GO:0016151">
    <property type="term" value="F:nickel cation binding"/>
    <property type="evidence" value="ECO:0007669"/>
    <property type="project" value="UniProtKB-UniRule"/>
</dbReference>
<dbReference type="GO" id="GO:0010045">
    <property type="term" value="P:response to nickel cation"/>
    <property type="evidence" value="ECO:0007669"/>
    <property type="project" value="InterPro"/>
</dbReference>
<dbReference type="CDD" id="cd22231">
    <property type="entry name" value="RHH_NikR_HicB-like"/>
    <property type="match status" value="1"/>
</dbReference>
<dbReference type="Gene3D" id="3.30.70.1150">
    <property type="entry name" value="ACT-like. Chain A, domain 2"/>
    <property type="match status" value="1"/>
</dbReference>
<dbReference type="Gene3D" id="1.10.1220.10">
    <property type="entry name" value="Met repressor-like"/>
    <property type="match status" value="1"/>
</dbReference>
<dbReference type="HAMAP" id="MF_00476">
    <property type="entry name" value="NikR"/>
    <property type="match status" value="1"/>
</dbReference>
<dbReference type="InterPro" id="IPR027271">
    <property type="entry name" value="Acetolactate_synth/TF_NikR_C"/>
</dbReference>
<dbReference type="InterPro" id="IPR045865">
    <property type="entry name" value="ACT-like_dom_sf"/>
</dbReference>
<dbReference type="InterPro" id="IPR013321">
    <property type="entry name" value="Arc_rbn_hlx_hlx"/>
</dbReference>
<dbReference type="InterPro" id="IPR002145">
    <property type="entry name" value="CopG"/>
</dbReference>
<dbReference type="InterPro" id="IPR050192">
    <property type="entry name" value="CopG/NikR_regulator"/>
</dbReference>
<dbReference type="InterPro" id="IPR022988">
    <property type="entry name" value="Ni_resp_reg_NikR"/>
</dbReference>
<dbReference type="InterPro" id="IPR010985">
    <property type="entry name" value="Ribbon_hlx_hlx"/>
</dbReference>
<dbReference type="InterPro" id="IPR014864">
    <property type="entry name" value="TF_NikR_Ni-bd_C"/>
</dbReference>
<dbReference type="NCBIfam" id="NF002169">
    <property type="entry name" value="PRK01002.1"/>
    <property type="match status" value="1"/>
</dbReference>
<dbReference type="NCBIfam" id="NF002815">
    <property type="entry name" value="PRK02967.1"/>
    <property type="match status" value="1"/>
</dbReference>
<dbReference type="NCBIfam" id="NF003381">
    <property type="entry name" value="PRK04460.1"/>
    <property type="match status" value="1"/>
</dbReference>
<dbReference type="PANTHER" id="PTHR34719">
    <property type="entry name" value="NICKEL-RESPONSIVE REGULATOR"/>
    <property type="match status" value="1"/>
</dbReference>
<dbReference type="PANTHER" id="PTHR34719:SF2">
    <property type="entry name" value="NICKEL-RESPONSIVE REGULATOR"/>
    <property type="match status" value="1"/>
</dbReference>
<dbReference type="Pfam" id="PF08753">
    <property type="entry name" value="NikR_C"/>
    <property type="match status" value="1"/>
</dbReference>
<dbReference type="Pfam" id="PF01402">
    <property type="entry name" value="RHH_1"/>
    <property type="match status" value="1"/>
</dbReference>
<dbReference type="SUPFAM" id="SSF55021">
    <property type="entry name" value="ACT-like"/>
    <property type="match status" value="1"/>
</dbReference>
<dbReference type="SUPFAM" id="SSF47598">
    <property type="entry name" value="Ribbon-helix-helix"/>
    <property type="match status" value="1"/>
</dbReference>
<reference key="1">
    <citation type="journal article" date="2002" name="J. Mol. Microbiol. Biotechnol.">
        <title>The genome of Methanosarcina mazei: evidence for lateral gene transfer between Bacteria and Archaea.</title>
        <authorList>
            <person name="Deppenmeier U."/>
            <person name="Johann A."/>
            <person name="Hartsch T."/>
            <person name="Merkl R."/>
            <person name="Schmitz R.A."/>
            <person name="Martinez-Arias R."/>
            <person name="Henne A."/>
            <person name="Wiezer A."/>
            <person name="Baeumer S."/>
            <person name="Jacobi C."/>
            <person name="Brueggemann H."/>
            <person name="Lienard T."/>
            <person name="Christmann A."/>
            <person name="Boemecke M."/>
            <person name="Steckel S."/>
            <person name="Bhattacharyya A."/>
            <person name="Lykidis A."/>
            <person name="Overbeek R."/>
            <person name="Klenk H.-P."/>
            <person name="Gunsalus R.P."/>
            <person name="Fritz H.-J."/>
            <person name="Gottschalk G."/>
        </authorList>
    </citation>
    <scope>NUCLEOTIDE SEQUENCE [LARGE SCALE GENOMIC DNA]</scope>
    <source>
        <strain>ATCC BAA-159 / DSM 3647 / Goe1 / Go1 / JCM 11833 / OCM 88</strain>
    </source>
</reference>
<gene>
    <name type="ordered locus">MM_2657</name>
</gene>
<protein>
    <recommendedName>
        <fullName>Putative nickel-responsive regulator 3</fullName>
    </recommendedName>
</protein>
<accession>Q8PTQ6</accession>
<keyword id="KW-0238">DNA-binding</keyword>
<keyword id="KW-0479">Metal-binding</keyword>
<keyword id="KW-0533">Nickel</keyword>
<keyword id="KW-0804">Transcription</keyword>
<keyword id="KW-0805">Transcription regulation</keyword>
<sequence>MGKKLMRIGISLPGELLDKFDKTLMKRGYSSRSEGIRDAIRTYNQHYEWMKQIRGSRSATISIVYDCSKKGVTSTLAEIQHEYVDMISSSVHFHMEEDLCFEVIILRGEGEQIVDLAQRILSIKGVKHLRLTTVPEEKNE</sequence>
<proteinExistence type="inferred from homology"/>